<proteinExistence type="inferred from homology"/>
<name>Y1339_PSEPG</name>
<reference key="1">
    <citation type="submission" date="2008-01" db="EMBL/GenBank/DDBJ databases">
        <title>Complete sequence of Pseudomonas putida GB-1.</title>
        <authorList>
            <consortium name="US DOE Joint Genome Institute"/>
            <person name="Copeland A."/>
            <person name="Lucas S."/>
            <person name="Lapidus A."/>
            <person name="Barry K."/>
            <person name="Glavina del Rio T."/>
            <person name="Dalin E."/>
            <person name="Tice H."/>
            <person name="Pitluck S."/>
            <person name="Bruce D."/>
            <person name="Goodwin L."/>
            <person name="Chertkov O."/>
            <person name="Brettin T."/>
            <person name="Detter J.C."/>
            <person name="Han C."/>
            <person name="Kuske C.R."/>
            <person name="Schmutz J."/>
            <person name="Larimer F."/>
            <person name="Land M."/>
            <person name="Hauser L."/>
            <person name="Kyrpides N."/>
            <person name="Kim E."/>
            <person name="McCarthy J.K."/>
            <person name="Richardson P."/>
        </authorList>
    </citation>
    <scope>NUCLEOTIDE SEQUENCE [LARGE SCALE GENOMIC DNA]</scope>
    <source>
        <strain>GB-1</strain>
    </source>
</reference>
<sequence length="75" mass="8597">MLIPYEQLQAETLTRLIEDFVTRDGTDNGDDTPLETRVLRVRQALAKGQAFILFDPESQQCQLLAKHDVPRELLD</sequence>
<evidence type="ECO:0000255" key="1">
    <source>
        <dbReference type="HAMAP-Rule" id="MF_00690"/>
    </source>
</evidence>
<organism>
    <name type="scientific">Pseudomonas putida (strain GB-1)</name>
    <dbReference type="NCBI Taxonomy" id="76869"/>
    <lineage>
        <taxon>Bacteria</taxon>
        <taxon>Pseudomonadati</taxon>
        <taxon>Pseudomonadota</taxon>
        <taxon>Gammaproteobacteria</taxon>
        <taxon>Pseudomonadales</taxon>
        <taxon>Pseudomonadaceae</taxon>
        <taxon>Pseudomonas</taxon>
    </lineage>
</organism>
<feature type="chain" id="PRO_1000083112" description="UPF0270 protein PputGB1_1339">
    <location>
        <begin position="1"/>
        <end position="75"/>
    </location>
</feature>
<dbReference type="EMBL" id="CP000926">
    <property type="protein sequence ID" value="ABY97246.1"/>
    <property type="molecule type" value="Genomic_DNA"/>
</dbReference>
<dbReference type="RefSeq" id="WP_009682864.1">
    <property type="nucleotide sequence ID" value="NC_010322.1"/>
</dbReference>
<dbReference type="SMR" id="B0KTV7"/>
<dbReference type="KEGG" id="ppg:PputGB1_1339"/>
<dbReference type="eggNOG" id="COG3089">
    <property type="taxonomic scope" value="Bacteria"/>
</dbReference>
<dbReference type="HOGENOM" id="CLU_186759_2_0_6"/>
<dbReference type="Proteomes" id="UP000002157">
    <property type="component" value="Chromosome"/>
</dbReference>
<dbReference type="Gene3D" id="1.10.10.610">
    <property type="entry name" value="YehU-like"/>
    <property type="match status" value="1"/>
</dbReference>
<dbReference type="HAMAP" id="MF_00690">
    <property type="entry name" value="UPF0270"/>
    <property type="match status" value="1"/>
</dbReference>
<dbReference type="InterPro" id="IPR010648">
    <property type="entry name" value="UPF0270"/>
</dbReference>
<dbReference type="InterPro" id="IPR036685">
    <property type="entry name" value="YehU-like_sf"/>
</dbReference>
<dbReference type="NCBIfam" id="NF001441">
    <property type="entry name" value="PRK00304.1"/>
    <property type="match status" value="1"/>
</dbReference>
<dbReference type="Pfam" id="PF06794">
    <property type="entry name" value="UPF0270"/>
    <property type="match status" value="1"/>
</dbReference>
<dbReference type="PIRSF" id="PIRSF006169">
    <property type="entry name" value="UCP006169"/>
    <property type="match status" value="1"/>
</dbReference>
<dbReference type="SUPFAM" id="SSF118001">
    <property type="entry name" value="YehU-like"/>
    <property type="match status" value="1"/>
</dbReference>
<protein>
    <recommendedName>
        <fullName evidence="1">UPF0270 protein PputGB1_1339</fullName>
    </recommendedName>
</protein>
<accession>B0KTV7</accession>
<gene>
    <name type="ordered locus">PputGB1_1339</name>
</gene>
<comment type="similarity">
    <text evidence="1">Belongs to the UPF0270 family.</text>
</comment>